<feature type="chain" id="PRO_0000164780" description="Gene 53 protein">
    <location>
        <begin position="1"/>
        <end position="235"/>
    </location>
</feature>
<name>VG53_BPMD2</name>
<reference key="1">
    <citation type="journal article" date="1998" name="J. Mol. Biol.">
        <title>Genome structure of mycobacteriophage D29: implications for phage evolution.</title>
        <authorList>
            <person name="Ford M.E."/>
            <person name="Sarkis G.J."/>
            <person name="Belanger A.E."/>
            <person name="Hendrix R.W."/>
            <person name="Hatfull G.F."/>
        </authorList>
    </citation>
    <scope>NUCLEOTIDE SEQUENCE [LARGE SCALE GENOMIC DNA]</scope>
</reference>
<accession>O64243</accession>
<sequence length="235" mass="26339">MTGDINKLFMRATRKAMIGWETNLTADEIVQELWVWYLESPYIQKKLGELRPGEAVIYVRKQVHNILSGSAKARDLFQERSHYSSDNVKDALRGESTNRYLVDILPLAMKELGSKNERHAEAIRVRYDDGVVPERGSAAEAMLKRAVKSLTEHVNIIAITAGVERDDNGKVIVKDGPGSKHAIFPDIRKVQGEGHSDPTANIAIMLVEHPGLRDEYLYEPPIPEFLGGRCYAKSA</sequence>
<proteinExistence type="predicted"/>
<organism>
    <name type="scientific">Mycobacterium phage D29</name>
    <name type="common">Mycobacteriophage D29</name>
    <dbReference type="NCBI Taxonomy" id="28369"/>
    <lineage>
        <taxon>Viruses</taxon>
        <taxon>Duplodnaviria</taxon>
        <taxon>Heunggongvirae</taxon>
        <taxon>Uroviricota</taxon>
        <taxon>Caudoviricetes</taxon>
        <taxon>Fromanvirus</taxon>
    </lineage>
</organism>
<gene>
    <name type="primary">53</name>
</gene>
<keyword id="KW-1185">Reference proteome</keyword>
<organismHost>
    <name type="scientific">Mycobacterium</name>
    <dbReference type="NCBI Taxonomy" id="1763"/>
</organismHost>
<protein>
    <recommendedName>
        <fullName>Gene 53 protein</fullName>
    </recommendedName>
    <alternativeName>
        <fullName>Gp53</fullName>
    </alternativeName>
</protein>
<dbReference type="EMBL" id="AF022214">
    <property type="protein sequence ID" value="AAC18493.1"/>
    <property type="molecule type" value="Genomic_DNA"/>
</dbReference>
<dbReference type="PIR" id="B72806">
    <property type="entry name" value="B72806"/>
</dbReference>
<dbReference type="RefSeq" id="NP_046868.1">
    <property type="nucleotide sequence ID" value="NC_001900.1"/>
</dbReference>
<dbReference type="GeneID" id="1261595"/>
<dbReference type="KEGG" id="vg:1261595"/>
<dbReference type="OrthoDB" id="6368at10239"/>
<dbReference type="Proteomes" id="UP000002131">
    <property type="component" value="Segment"/>
</dbReference>